<keyword id="KW-0004">4Fe-4S</keyword>
<keyword id="KW-0963">Cytoplasm</keyword>
<keyword id="KW-0408">Iron</keyword>
<keyword id="KW-0411">Iron-sulfur</keyword>
<keyword id="KW-0479">Metal-binding</keyword>
<keyword id="KW-0662">Pyridine nucleotide biosynthesis</keyword>
<keyword id="KW-0808">Transferase</keyword>
<sequence length="378" mass="40800">MQSAIKPVEYDRPLAAGAACGVGEAWAKVPAPLAAGEREALKARIKALLEREKAVLVAHYYVDAELQELADETGGCVADSLEMARFGRDHGAQTLVVAGVRFMGETAKILSPGKRVLMPDLDATCSLDLGCPVDEFSRFCDAHPDRTVVVYANTSAAVKARADWMVTSSIGLEIVANLHARGEKIIWAPDRHLGGYIQKKTGADMLMWQGSCLVHDEFKGIELDLLRNEYPDAKILVHPESPEGVVALADVVGSTTQLIDAAVKLDAQRFIVATDLGILHKMRLAAPGKTFIEAPTAGNSATCKSCAHCPWMAMNVLSNLADVLERGHNEIFVDAAIAERARVPIDRMLDFAARHKQRVQASGDLLRDQQLFANVGAA</sequence>
<feature type="chain" id="PRO_1000024952" description="Quinolinate synthase">
    <location>
        <begin position="1"/>
        <end position="378"/>
    </location>
</feature>
<feature type="binding site" evidence="1">
    <location>
        <position position="59"/>
    </location>
    <ligand>
        <name>iminosuccinate</name>
        <dbReference type="ChEBI" id="CHEBI:77875"/>
    </ligand>
</feature>
<feature type="binding site" evidence="1">
    <location>
        <position position="80"/>
    </location>
    <ligand>
        <name>iminosuccinate</name>
        <dbReference type="ChEBI" id="CHEBI:77875"/>
    </ligand>
</feature>
<feature type="binding site" evidence="1">
    <location>
        <position position="125"/>
    </location>
    <ligand>
        <name>[4Fe-4S] cluster</name>
        <dbReference type="ChEBI" id="CHEBI:49883"/>
    </ligand>
</feature>
<feature type="binding site" evidence="1">
    <location>
        <begin position="151"/>
        <end position="153"/>
    </location>
    <ligand>
        <name>iminosuccinate</name>
        <dbReference type="ChEBI" id="CHEBI:77875"/>
    </ligand>
</feature>
<feature type="binding site" evidence="1">
    <location>
        <position position="168"/>
    </location>
    <ligand>
        <name>iminosuccinate</name>
        <dbReference type="ChEBI" id="CHEBI:77875"/>
    </ligand>
</feature>
<feature type="binding site" evidence="1">
    <location>
        <position position="212"/>
    </location>
    <ligand>
        <name>[4Fe-4S] cluster</name>
        <dbReference type="ChEBI" id="CHEBI:49883"/>
    </ligand>
</feature>
<feature type="binding site" evidence="1">
    <location>
        <begin position="238"/>
        <end position="240"/>
    </location>
    <ligand>
        <name>iminosuccinate</name>
        <dbReference type="ChEBI" id="CHEBI:77875"/>
    </ligand>
</feature>
<feature type="binding site" evidence="1">
    <location>
        <position position="255"/>
    </location>
    <ligand>
        <name>iminosuccinate</name>
        <dbReference type="ChEBI" id="CHEBI:77875"/>
    </ligand>
</feature>
<feature type="binding site" evidence="1">
    <location>
        <position position="309"/>
    </location>
    <ligand>
        <name>[4Fe-4S] cluster</name>
        <dbReference type="ChEBI" id="CHEBI:49883"/>
    </ligand>
</feature>
<proteinExistence type="inferred from homology"/>
<protein>
    <recommendedName>
        <fullName evidence="1">Quinolinate synthase</fullName>
        <ecNumber evidence="1">2.5.1.72</ecNumber>
    </recommendedName>
</protein>
<evidence type="ECO:0000255" key="1">
    <source>
        <dbReference type="HAMAP-Rule" id="MF_00567"/>
    </source>
</evidence>
<reference key="1">
    <citation type="journal article" date="2005" name="BMC Genomics">
        <title>Bacterial genome adaptation to niches: divergence of the potential virulence genes in three Burkholderia species of different survival strategies.</title>
        <authorList>
            <person name="Kim H.S."/>
            <person name="Schell M.A."/>
            <person name="Yu Y."/>
            <person name="Ulrich R.L."/>
            <person name="Sarria S.H."/>
            <person name="Nierman W.C."/>
            <person name="DeShazer D."/>
        </authorList>
    </citation>
    <scope>NUCLEOTIDE SEQUENCE [LARGE SCALE GENOMIC DNA]</scope>
    <source>
        <strain>ATCC 700388 / DSM 13276 / CCUG 48851 / CIP 106301 / E264</strain>
    </source>
</reference>
<dbReference type="EC" id="2.5.1.72" evidence="1"/>
<dbReference type="EMBL" id="CP000086">
    <property type="protein sequence ID" value="ABC38710.1"/>
    <property type="molecule type" value="Genomic_DNA"/>
</dbReference>
<dbReference type="RefSeq" id="WP_009892589.1">
    <property type="nucleotide sequence ID" value="NZ_CP008785.1"/>
</dbReference>
<dbReference type="SMR" id="Q2T0G7"/>
<dbReference type="GeneID" id="45120535"/>
<dbReference type="KEGG" id="bte:BTH_I0776"/>
<dbReference type="HOGENOM" id="CLU_047382_1_0_4"/>
<dbReference type="UniPathway" id="UPA00253">
    <property type="reaction ID" value="UER00327"/>
</dbReference>
<dbReference type="Proteomes" id="UP000001930">
    <property type="component" value="Chromosome I"/>
</dbReference>
<dbReference type="GO" id="GO:0005829">
    <property type="term" value="C:cytosol"/>
    <property type="evidence" value="ECO:0007669"/>
    <property type="project" value="TreeGrafter"/>
</dbReference>
<dbReference type="GO" id="GO:0051539">
    <property type="term" value="F:4 iron, 4 sulfur cluster binding"/>
    <property type="evidence" value="ECO:0007669"/>
    <property type="project" value="UniProtKB-KW"/>
</dbReference>
<dbReference type="GO" id="GO:0046872">
    <property type="term" value="F:metal ion binding"/>
    <property type="evidence" value="ECO:0007669"/>
    <property type="project" value="UniProtKB-KW"/>
</dbReference>
<dbReference type="GO" id="GO:0008987">
    <property type="term" value="F:quinolinate synthetase A activity"/>
    <property type="evidence" value="ECO:0007669"/>
    <property type="project" value="UniProtKB-UniRule"/>
</dbReference>
<dbReference type="GO" id="GO:0034628">
    <property type="term" value="P:'de novo' NAD biosynthetic process from L-aspartate"/>
    <property type="evidence" value="ECO:0007669"/>
    <property type="project" value="TreeGrafter"/>
</dbReference>
<dbReference type="FunFam" id="3.40.50.10800:FF:000001">
    <property type="entry name" value="Quinolinate synthase A"/>
    <property type="match status" value="1"/>
</dbReference>
<dbReference type="FunFam" id="3.40.50.10800:FF:000003">
    <property type="entry name" value="Quinolinate synthase A"/>
    <property type="match status" value="1"/>
</dbReference>
<dbReference type="Gene3D" id="3.40.50.10800">
    <property type="entry name" value="NadA-like"/>
    <property type="match status" value="3"/>
</dbReference>
<dbReference type="HAMAP" id="MF_00567">
    <property type="entry name" value="NadA_type1"/>
    <property type="match status" value="1"/>
</dbReference>
<dbReference type="InterPro" id="IPR003473">
    <property type="entry name" value="NadA"/>
</dbReference>
<dbReference type="InterPro" id="IPR036094">
    <property type="entry name" value="NadA_sf"/>
</dbReference>
<dbReference type="InterPro" id="IPR023513">
    <property type="entry name" value="Quinolinate_synth_A_type1"/>
</dbReference>
<dbReference type="NCBIfam" id="TIGR00550">
    <property type="entry name" value="nadA"/>
    <property type="match status" value="1"/>
</dbReference>
<dbReference type="NCBIfam" id="NF006877">
    <property type="entry name" value="PRK09375.1-1"/>
    <property type="match status" value="1"/>
</dbReference>
<dbReference type="NCBIfam" id="NF006878">
    <property type="entry name" value="PRK09375.1-2"/>
    <property type="match status" value="1"/>
</dbReference>
<dbReference type="PANTHER" id="PTHR30573:SF0">
    <property type="entry name" value="QUINOLINATE SYNTHASE, CHLOROPLASTIC"/>
    <property type="match status" value="1"/>
</dbReference>
<dbReference type="PANTHER" id="PTHR30573">
    <property type="entry name" value="QUINOLINATE SYNTHETASE A"/>
    <property type="match status" value="1"/>
</dbReference>
<dbReference type="Pfam" id="PF02445">
    <property type="entry name" value="NadA"/>
    <property type="match status" value="1"/>
</dbReference>
<dbReference type="SUPFAM" id="SSF142754">
    <property type="entry name" value="NadA-like"/>
    <property type="match status" value="1"/>
</dbReference>
<gene>
    <name evidence="1" type="primary">nadA</name>
    <name type="ordered locus">BTH_I0776</name>
</gene>
<name>NADA_BURTA</name>
<comment type="function">
    <text evidence="1">Catalyzes the condensation of iminoaspartate with dihydroxyacetone phosphate to form quinolinate.</text>
</comment>
<comment type="catalytic activity">
    <reaction evidence="1">
        <text>iminosuccinate + dihydroxyacetone phosphate = quinolinate + phosphate + 2 H2O + H(+)</text>
        <dbReference type="Rhea" id="RHEA:25888"/>
        <dbReference type="ChEBI" id="CHEBI:15377"/>
        <dbReference type="ChEBI" id="CHEBI:15378"/>
        <dbReference type="ChEBI" id="CHEBI:29959"/>
        <dbReference type="ChEBI" id="CHEBI:43474"/>
        <dbReference type="ChEBI" id="CHEBI:57642"/>
        <dbReference type="ChEBI" id="CHEBI:77875"/>
        <dbReference type="EC" id="2.5.1.72"/>
    </reaction>
    <physiologicalReaction direction="left-to-right" evidence="1">
        <dbReference type="Rhea" id="RHEA:25889"/>
    </physiologicalReaction>
</comment>
<comment type="cofactor">
    <cofactor evidence="1">
        <name>[4Fe-4S] cluster</name>
        <dbReference type="ChEBI" id="CHEBI:49883"/>
    </cofactor>
    <text evidence="1">Binds 1 [4Fe-4S] cluster per subunit.</text>
</comment>
<comment type="pathway">
    <text evidence="1">Cofactor biosynthesis; NAD(+) biosynthesis; quinolinate from iminoaspartate: step 1/1.</text>
</comment>
<comment type="subcellular location">
    <subcellularLocation>
        <location evidence="1">Cytoplasm</location>
    </subcellularLocation>
</comment>
<comment type="similarity">
    <text evidence="1">Belongs to the quinolinate synthase family. Type 1 subfamily.</text>
</comment>
<accession>Q2T0G7</accession>
<organism>
    <name type="scientific">Burkholderia thailandensis (strain ATCC 700388 / DSM 13276 / CCUG 48851 / CIP 106301 / E264)</name>
    <dbReference type="NCBI Taxonomy" id="271848"/>
    <lineage>
        <taxon>Bacteria</taxon>
        <taxon>Pseudomonadati</taxon>
        <taxon>Pseudomonadota</taxon>
        <taxon>Betaproteobacteria</taxon>
        <taxon>Burkholderiales</taxon>
        <taxon>Burkholderiaceae</taxon>
        <taxon>Burkholderia</taxon>
        <taxon>pseudomallei group</taxon>
    </lineage>
</organism>